<reference key="1">
    <citation type="submission" date="2006-08" db="EMBL/GenBank/DDBJ databases">
        <title>Waprins: a distinct toxin family from the venom of Australian elapid snakes.</title>
        <authorList>
            <person name="St Pierre L."/>
        </authorList>
    </citation>
    <scope>NUCLEOTIDE SEQUENCE [MRNA]</scope>
    <source>
        <tissue>Venom gland</tissue>
    </source>
</reference>
<comment type="function">
    <text evidence="1">Damages membranes of susceptible bacteria. Has no hemolytic activity. Not toxic to mice. Does not inhibit the proteinases elastase and cathepsin G.</text>
</comment>
<comment type="subcellular location">
    <subcellularLocation>
        <location evidence="6">Secreted</location>
    </subcellularLocation>
</comment>
<comment type="tissue specificity">
    <text evidence="6">Expressed by the venom gland.</text>
</comment>
<comment type="similarity">
    <text evidence="5">Belongs to the venom waprin family.</text>
</comment>
<protein>
    <recommendedName>
        <fullName evidence="4">Auswaprin-a</fullName>
    </recommendedName>
</protein>
<keyword id="KW-0044">Antibiotic</keyword>
<keyword id="KW-0929">Antimicrobial</keyword>
<keyword id="KW-1015">Disulfide bond</keyword>
<keyword id="KW-0964">Secreted</keyword>
<keyword id="KW-0732">Signal</keyword>
<dbReference type="EMBL" id="DQ917555">
    <property type="protein sequence ID" value="ABK63584.1"/>
    <property type="molecule type" value="mRNA"/>
</dbReference>
<dbReference type="SMR" id="B5G6G9"/>
<dbReference type="GO" id="GO:0005576">
    <property type="term" value="C:extracellular region"/>
    <property type="evidence" value="ECO:0000250"/>
    <property type="project" value="UniProtKB"/>
</dbReference>
<dbReference type="GO" id="GO:0005615">
    <property type="term" value="C:extracellular space"/>
    <property type="evidence" value="ECO:0007669"/>
    <property type="project" value="TreeGrafter"/>
</dbReference>
<dbReference type="GO" id="GO:0004867">
    <property type="term" value="F:serine-type endopeptidase inhibitor activity"/>
    <property type="evidence" value="ECO:0007669"/>
    <property type="project" value="TreeGrafter"/>
</dbReference>
<dbReference type="GO" id="GO:0019731">
    <property type="term" value="P:antibacterial humoral response"/>
    <property type="evidence" value="ECO:0007669"/>
    <property type="project" value="TreeGrafter"/>
</dbReference>
<dbReference type="GO" id="GO:0045087">
    <property type="term" value="P:innate immune response"/>
    <property type="evidence" value="ECO:0007669"/>
    <property type="project" value="TreeGrafter"/>
</dbReference>
<dbReference type="GO" id="GO:0044278">
    <property type="term" value="P:venom-mediated disruption of cell wall in another organism"/>
    <property type="evidence" value="ECO:0000250"/>
    <property type="project" value="UniProtKB"/>
</dbReference>
<dbReference type="Gene3D" id="4.10.75.10">
    <property type="entry name" value="Elafin-like"/>
    <property type="match status" value="1"/>
</dbReference>
<dbReference type="InterPro" id="IPR036645">
    <property type="entry name" value="Elafin-like_sf"/>
</dbReference>
<dbReference type="InterPro" id="IPR008197">
    <property type="entry name" value="WAP_dom"/>
</dbReference>
<dbReference type="InterPro" id="IPR050514">
    <property type="entry name" value="WAP_four-disulfide_core"/>
</dbReference>
<dbReference type="PANTHER" id="PTHR19441:SF30">
    <property type="entry name" value="ELAFIN"/>
    <property type="match status" value="1"/>
</dbReference>
<dbReference type="PANTHER" id="PTHR19441">
    <property type="entry name" value="WHEY ACDIC PROTEIN WAP"/>
    <property type="match status" value="1"/>
</dbReference>
<dbReference type="Pfam" id="PF00095">
    <property type="entry name" value="WAP"/>
    <property type="match status" value="1"/>
</dbReference>
<dbReference type="PRINTS" id="PR00003">
    <property type="entry name" value="4DISULPHCORE"/>
</dbReference>
<dbReference type="SMART" id="SM00217">
    <property type="entry name" value="WAP"/>
    <property type="match status" value="1"/>
</dbReference>
<dbReference type="SUPFAM" id="SSF57256">
    <property type="entry name" value="Elafin-like"/>
    <property type="match status" value="1"/>
</dbReference>
<dbReference type="PROSITE" id="PS51390">
    <property type="entry name" value="WAP"/>
    <property type="match status" value="1"/>
</dbReference>
<evidence type="ECO:0000250" key="1">
    <source>
        <dbReference type="UniProtKB" id="P83952"/>
    </source>
</evidence>
<evidence type="ECO:0000255" key="2"/>
<evidence type="ECO:0000255" key="3">
    <source>
        <dbReference type="PROSITE-ProRule" id="PRU00722"/>
    </source>
</evidence>
<evidence type="ECO:0000303" key="4">
    <source ref="1"/>
</evidence>
<evidence type="ECO:0000305" key="5"/>
<evidence type="ECO:0000305" key="6">
    <source ref="1"/>
</evidence>
<accession>B5G6G9</accession>
<name>WAPA_PSEAU</name>
<sequence>MSSGGLLLLLGLLTLWGVLTPVSSKDRPKKPGLCPPRPQKPCVKECKNDWSCSGQQKCCNYGCIDECRDPIFVN</sequence>
<feature type="signal peptide" evidence="2">
    <location>
        <begin position="1"/>
        <end position="24"/>
    </location>
</feature>
<feature type="chain" id="PRO_5000395569" description="Auswaprin-a">
    <location>
        <begin position="25"/>
        <end position="74"/>
    </location>
</feature>
<feature type="domain" description="WAP" evidence="3">
    <location>
        <begin position="27"/>
        <end position="71"/>
    </location>
</feature>
<feature type="disulfide bond" evidence="3">
    <location>
        <begin position="34"/>
        <end position="59"/>
    </location>
</feature>
<feature type="disulfide bond" evidence="3">
    <location>
        <begin position="42"/>
        <end position="63"/>
    </location>
</feature>
<feature type="disulfide bond" evidence="3">
    <location>
        <begin position="46"/>
        <end position="58"/>
    </location>
</feature>
<feature type="disulfide bond" evidence="3">
    <location>
        <begin position="52"/>
        <end position="67"/>
    </location>
</feature>
<organism>
    <name type="scientific">Pseudechis australis</name>
    <name type="common">Mulga snake</name>
    <name type="synonym">King brown snake</name>
    <dbReference type="NCBI Taxonomy" id="8670"/>
    <lineage>
        <taxon>Eukaryota</taxon>
        <taxon>Metazoa</taxon>
        <taxon>Chordata</taxon>
        <taxon>Craniata</taxon>
        <taxon>Vertebrata</taxon>
        <taxon>Euteleostomi</taxon>
        <taxon>Lepidosauria</taxon>
        <taxon>Squamata</taxon>
        <taxon>Bifurcata</taxon>
        <taxon>Unidentata</taxon>
        <taxon>Episquamata</taxon>
        <taxon>Toxicofera</taxon>
        <taxon>Serpentes</taxon>
        <taxon>Colubroidea</taxon>
        <taxon>Elapidae</taxon>
        <taxon>Hydrophiinae</taxon>
        <taxon>Pseudechis</taxon>
    </lineage>
</organism>
<proteinExistence type="inferred from homology"/>